<proteinExistence type="inferred from homology"/>
<gene>
    <name evidence="1" type="primary">hisG</name>
    <name type="ordered locus">TERTU_3810</name>
</gene>
<sequence>MSQLTIALTKGRILEETLPLLSAAGIEPLEDIQKSRKLLFETSSQNVRLLILRGVDVPTYVEFGAADVGVSGKDTLIEHNSKSYYEPLDLHIAKCRMMTAGIKGVPQKSGRIRVATKYVGLARQYYAEQGRQVDIIKLYGAMELAPIMNLCDEIVDIVDTGNTLRANGLEPRETICEISSRLIVNKASMKMKHREIEALIDAVSAAVNERIAA</sequence>
<dbReference type="EC" id="2.4.2.17" evidence="1"/>
<dbReference type="EMBL" id="CP001614">
    <property type="protein sequence ID" value="ACR11837.1"/>
    <property type="molecule type" value="Genomic_DNA"/>
</dbReference>
<dbReference type="RefSeq" id="WP_015817948.1">
    <property type="nucleotide sequence ID" value="NC_012997.1"/>
</dbReference>
<dbReference type="SMR" id="C5BSW3"/>
<dbReference type="STRING" id="377629.TERTU_3810"/>
<dbReference type="KEGG" id="ttu:TERTU_3810"/>
<dbReference type="eggNOG" id="COG0040">
    <property type="taxonomic scope" value="Bacteria"/>
</dbReference>
<dbReference type="HOGENOM" id="CLU_038115_2_0_6"/>
<dbReference type="OrthoDB" id="9801867at2"/>
<dbReference type="UniPathway" id="UPA00031">
    <property type="reaction ID" value="UER00006"/>
</dbReference>
<dbReference type="Proteomes" id="UP000009080">
    <property type="component" value="Chromosome"/>
</dbReference>
<dbReference type="GO" id="GO:0005737">
    <property type="term" value="C:cytoplasm"/>
    <property type="evidence" value="ECO:0007669"/>
    <property type="project" value="UniProtKB-SubCell"/>
</dbReference>
<dbReference type="GO" id="GO:0005524">
    <property type="term" value="F:ATP binding"/>
    <property type="evidence" value="ECO:0007669"/>
    <property type="project" value="UniProtKB-KW"/>
</dbReference>
<dbReference type="GO" id="GO:0003879">
    <property type="term" value="F:ATP phosphoribosyltransferase activity"/>
    <property type="evidence" value="ECO:0007669"/>
    <property type="project" value="UniProtKB-UniRule"/>
</dbReference>
<dbReference type="GO" id="GO:0000105">
    <property type="term" value="P:L-histidine biosynthetic process"/>
    <property type="evidence" value="ECO:0007669"/>
    <property type="project" value="UniProtKB-UniRule"/>
</dbReference>
<dbReference type="CDD" id="cd13595">
    <property type="entry name" value="PBP2_HisGs"/>
    <property type="match status" value="1"/>
</dbReference>
<dbReference type="FunFam" id="3.40.190.10:FF:000011">
    <property type="entry name" value="ATP phosphoribosyltransferase"/>
    <property type="match status" value="1"/>
</dbReference>
<dbReference type="Gene3D" id="3.40.190.10">
    <property type="entry name" value="Periplasmic binding protein-like II"/>
    <property type="match status" value="2"/>
</dbReference>
<dbReference type="HAMAP" id="MF_01018">
    <property type="entry name" value="HisG_Short"/>
    <property type="match status" value="1"/>
</dbReference>
<dbReference type="InterPro" id="IPR013820">
    <property type="entry name" value="ATP_PRibTrfase_cat"/>
</dbReference>
<dbReference type="InterPro" id="IPR001348">
    <property type="entry name" value="ATP_PRibTrfase_HisG"/>
</dbReference>
<dbReference type="InterPro" id="IPR024893">
    <property type="entry name" value="ATP_PRibTrfase_HisG_short"/>
</dbReference>
<dbReference type="NCBIfam" id="TIGR00070">
    <property type="entry name" value="hisG"/>
    <property type="match status" value="1"/>
</dbReference>
<dbReference type="PANTHER" id="PTHR21403:SF8">
    <property type="entry name" value="ATP PHOSPHORIBOSYLTRANSFERASE"/>
    <property type="match status" value="1"/>
</dbReference>
<dbReference type="PANTHER" id="PTHR21403">
    <property type="entry name" value="ATP PHOSPHORIBOSYLTRANSFERASE ATP-PRTASE"/>
    <property type="match status" value="1"/>
</dbReference>
<dbReference type="Pfam" id="PF01634">
    <property type="entry name" value="HisG"/>
    <property type="match status" value="1"/>
</dbReference>
<dbReference type="SUPFAM" id="SSF53850">
    <property type="entry name" value="Periplasmic binding protein-like II"/>
    <property type="match status" value="1"/>
</dbReference>
<accession>C5BSW3</accession>
<keyword id="KW-0028">Amino-acid biosynthesis</keyword>
<keyword id="KW-0067">ATP-binding</keyword>
<keyword id="KW-0963">Cytoplasm</keyword>
<keyword id="KW-0328">Glycosyltransferase</keyword>
<keyword id="KW-0368">Histidine biosynthesis</keyword>
<keyword id="KW-0547">Nucleotide-binding</keyword>
<keyword id="KW-1185">Reference proteome</keyword>
<keyword id="KW-0808">Transferase</keyword>
<feature type="chain" id="PRO_1000213278" description="ATP phosphoribosyltransferase">
    <location>
        <begin position="1"/>
        <end position="213"/>
    </location>
</feature>
<organism>
    <name type="scientific">Teredinibacter turnerae (strain ATCC 39867 / T7901)</name>
    <dbReference type="NCBI Taxonomy" id="377629"/>
    <lineage>
        <taxon>Bacteria</taxon>
        <taxon>Pseudomonadati</taxon>
        <taxon>Pseudomonadota</taxon>
        <taxon>Gammaproteobacteria</taxon>
        <taxon>Cellvibrionales</taxon>
        <taxon>Cellvibrionaceae</taxon>
        <taxon>Teredinibacter</taxon>
    </lineage>
</organism>
<comment type="function">
    <text evidence="1">Catalyzes the condensation of ATP and 5-phosphoribose 1-diphosphate to form N'-(5'-phosphoribosyl)-ATP (PR-ATP). Has a crucial role in the pathway because the rate of histidine biosynthesis seems to be controlled primarily by regulation of HisG enzymatic activity.</text>
</comment>
<comment type="catalytic activity">
    <reaction evidence="1">
        <text>1-(5-phospho-beta-D-ribosyl)-ATP + diphosphate = 5-phospho-alpha-D-ribose 1-diphosphate + ATP</text>
        <dbReference type="Rhea" id="RHEA:18473"/>
        <dbReference type="ChEBI" id="CHEBI:30616"/>
        <dbReference type="ChEBI" id="CHEBI:33019"/>
        <dbReference type="ChEBI" id="CHEBI:58017"/>
        <dbReference type="ChEBI" id="CHEBI:73183"/>
        <dbReference type="EC" id="2.4.2.17"/>
    </reaction>
</comment>
<comment type="pathway">
    <text evidence="1">Amino-acid biosynthesis; L-histidine biosynthesis; L-histidine from 5-phospho-alpha-D-ribose 1-diphosphate: step 1/9.</text>
</comment>
<comment type="subunit">
    <text evidence="1">Heteromultimer composed of HisG and HisZ subunits.</text>
</comment>
<comment type="subcellular location">
    <subcellularLocation>
        <location evidence="1">Cytoplasm</location>
    </subcellularLocation>
</comment>
<comment type="domain">
    <text>Lacks the C-terminal regulatory region which is replaced by HisZ.</text>
</comment>
<comment type="similarity">
    <text evidence="1">Belongs to the ATP phosphoribosyltransferase family. Short subfamily.</text>
</comment>
<evidence type="ECO:0000255" key="1">
    <source>
        <dbReference type="HAMAP-Rule" id="MF_01018"/>
    </source>
</evidence>
<name>HIS1_TERTT</name>
<reference key="1">
    <citation type="journal article" date="2009" name="PLoS ONE">
        <title>The complete genome of Teredinibacter turnerae T7901: an intracellular endosymbiont of marine wood-boring bivalves (shipworms).</title>
        <authorList>
            <person name="Yang J.C."/>
            <person name="Madupu R."/>
            <person name="Durkin A.S."/>
            <person name="Ekborg N.A."/>
            <person name="Pedamallu C.S."/>
            <person name="Hostetler J.B."/>
            <person name="Radune D."/>
            <person name="Toms B.S."/>
            <person name="Henrissat B."/>
            <person name="Coutinho P.M."/>
            <person name="Schwarz S."/>
            <person name="Field L."/>
            <person name="Trindade-Silva A.E."/>
            <person name="Soares C.A.G."/>
            <person name="Elshahawi S."/>
            <person name="Hanora A."/>
            <person name="Schmidt E.W."/>
            <person name="Haygood M.G."/>
            <person name="Posfai J."/>
            <person name="Benner J."/>
            <person name="Madinger C."/>
            <person name="Nove J."/>
            <person name="Anton B."/>
            <person name="Chaudhary K."/>
            <person name="Foster J."/>
            <person name="Holman A."/>
            <person name="Kumar S."/>
            <person name="Lessard P.A."/>
            <person name="Luyten Y.A."/>
            <person name="Slatko B."/>
            <person name="Wood N."/>
            <person name="Wu B."/>
            <person name="Teplitski M."/>
            <person name="Mougous J.D."/>
            <person name="Ward N."/>
            <person name="Eisen J.A."/>
            <person name="Badger J.H."/>
            <person name="Distel D.L."/>
        </authorList>
    </citation>
    <scope>NUCLEOTIDE SEQUENCE [LARGE SCALE GENOMIC DNA]</scope>
    <source>
        <strain>ATCC 39867 / T7901</strain>
    </source>
</reference>
<protein>
    <recommendedName>
        <fullName evidence="1">ATP phosphoribosyltransferase</fullName>
        <shortName evidence="1">ATP-PRT</shortName>
        <shortName evidence="1">ATP-PRTase</shortName>
        <ecNumber evidence="1">2.4.2.17</ecNumber>
    </recommendedName>
</protein>